<keyword id="KW-0009">Actin-binding</keyword>
<keyword id="KW-0130">Cell adhesion</keyword>
<keyword id="KW-0966">Cell projection</keyword>
<keyword id="KW-0963">Cytoplasm</keyword>
<keyword id="KW-0206">Cytoskeleton</keyword>
<keyword id="KW-1185">Reference proteome</keyword>
<keyword id="KW-0677">Repeat</keyword>
<gene>
    <name evidence="9" type="primary">pat-6</name>
    <name evidence="9" type="ORF">T21D12.4</name>
</gene>
<evidence type="ECO:0000255" key="1">
    <source>
        <dbReference type="PROSITE-ProRule" id="PRU00044"/>
    </source>
</evidence>
<evidence type="ECO:0000256" key="2">
    <source>
        <dbReference type="SAM" id="MobiDB-lite"/>
    </source>
</evidence>
<evidence type="ECO:0000269" key="3">
    <source>
    </source>
</evidence>
<evidence type="ECO:0000269" key="4">
    <source>
    </source>
</evidence>
<evidence type="ECO:0000269" key="5">
    <source>
    </source>
</evidence>
<evidence type="ECO:0000269" key="6">
    <source>
    </source>
</evidence>
<evidence type="ECO:0000305" key="7"/>
<evidence type="ECO:0000305" key="8">
    <source>
    </source>
</evidence>
<evidence type="ECO:0000312" key="9">
    <source>
        <dbReference type="WormBase" id="T21D12.4"/>
    </source>
</evidence>
<sequence>MSTLGRSKTPSRDEPKKPGVFEKLSGTLSRKKKAPEDEHGNQGGAHHATDEDEVLELELEGREALDQSLVPVLARNIWLEEGEIRRYLTKETARDQKLAQVVDLLIYWLNEELADQRIVVRHLQEDLFDGQIIQKLLEKLEQIRIEVPEVSQSEEGQRQKLQIVVQTANRILGQPREQEKWSADLIHQKDFTAIIQLLVLLALHYRAPVRFPDNVVANVVVAQKEHGQVKTHRITEQITTVQTELAPKGTRDAFDTLFDYGPDKLAHVKTSLLAFCNKHLNKINLEVSDLDNQFQDGVFLVLLVGLLEGYFVPLYHFNLQVQSHEEKVKNVQFAFKLMEDTGLEKPRSRVQDIANGDVKSTLRLLHLLFTKYKHI</sequence>
<accession>O16785</accession>
<comment type="function">
    <text evidence="3 4 5 6">Involved in the regulation of cell adhesion and cytoskeleton organization. Component of an integrin containing attachment complex, which is required for muscle development and maintenance (PubMed:22253611). During embryonic development, required to recruit cpna-1, unc-89 and myofilaments to newly forming integrin attachments composed of integrins pat-2/pat-3, pat-4 and unc-112 (PubMed:12781130, PubMed:23283987). Also required to reposition the integrin-based attachments so that they form the highly ordered array of dense body and M-line attachments that are characteristic of mature muscle cells (PubMed:12781130, PubMed:23283987). During the formation of neuromuscular junctions at the larval stage, negatively regulates membrane protrusion from body wall muscles (PubMed:16495308).</text>
</comment>
<comment type="subunit">
    <text evidence="3 8">May interact (via calponin-homology (CH) 2 domain) with pat-4 (via kinase domain) (PubMed:12781130). May form a complex with unc-112 and pat-4 (PubMed:12781130). Component of an integrin containing attachment complex, composed of at least pat-2, pat-3, pat-4, pat-6, unc-52, unc-97 and unc-112 (PubMed:22253611).</text>
</comment>
<comment type="interaction">
    <interactant intactId="EBI-328106">
        <id>O16785</id>
    </interactant>
    <interactant intactId="EBI-1564527">
        <id>Q9TZC4</id>
        <label>pat-4</label>
    </interactant>
    <organismsDiffer>false</organismsDiffer>
    <experiments>4</experiments>
</comment>
<comment type="subcellular location">
    <subcellularLocation>
        <location evidence="3">Cytoplasm</location>
        <location evidence="3">Cytoskeleton</location>
    </subcellularLocation>
    <subcellularLocation>
        <location evidence="6">Cytoplasm</location>
        <location evidence="6">Myofibril</location>
        <location evidence="6">Sarcomere</location>
        <location evidence="6">M line</location>
    </subcellularLocation>
    <subcellularLocation>
        <location evidence="3">Perikaryon</location>
    </subcellularLocation>
    <subcellularLocation>
        <location evidence="3">Cell projection</location>
        <location evidence="3">Axon</location>
    </subcellularLocation>
    <text evidence="3 6">Colocalizes with integrins and pat-4/ILK (PubMed:12781130). Colocalizes to M line and dense bodies with cpna-1 (PubMed:23283987).</text>
</comment>
<comment type="tissue specificity">
    <text evidence="3 6">Expressed from 1.5 stage embryos, mostly within the muscle cells (PubMed:12781130, PubMed:23283987). In adult hermaphrodites, expressed in the attachments of other muscles, including the uterine, anal depressor, anal sphincter, and vulval muscles, as well as in the spermatheca and the distal tip cells (PubMed:12781130). Expressed in mechanosensory receptor neurons ALML/R, PLML/R, AVM, and PVM (PubMed:12781130). Localizes at body wall muscle attachments (PubMed:12781130, PubMed:23283987).</text>
</comment>
<comment type="domain">
    <text>The calponin-homology (CH) domains are essential for its function during attachment assembly and the interaction with pat-4.</text>
</comment>
<comment type="disruption phenotype">
    <text evidence="4 5 6">In mutant embryos, abnormal accumulation of cpna-1 into large foci in body wall muscle cells (PubMed:23283987). RNAi-mediated knockdown results in impaired mobility, mitochondrial fragmentation and disrupted integrin attachment complexes in muscle (PubMed:22253611). This leads to degradation of muscle proteins in the cytosol, myofibrillar defects and disruption of sarcomere organization (PubMed:22253611). RNAi-mediated knockdown in L4 larval stage, causes ectopic membrane extensions from body wall muscles (PubMed:16495308).</text>
</comment>
<comment type="similarity">
    <text evidence="7">Belongs to the parvin family.</text>
</comment>
<protein>
    <recommendedName>
        <fullName>Paralyzed arrest at two-fold protein 6</fullName>
    </recommendedName>
    <alternativeName>
        <fullName>Actopaxin homolog</fullName>
    </alternativeName>
    <alternativeName>
        <fullName>Parvin-like protein</fullName>
    </alternativeName>
</protein>
<organism>
    <name type="scientific">Caenorhabditis elegans</name>
    <dbReference type="NCBI Taxonomy" id="6239"/>
    <lineage>
        <taxon>Eukaryota</taxon>
        <taxon>Metazoa</taxon>
        <taxon>Ecdysozoa</taxon>
        <taxon>Nematoda</taxon>
        <taxon>Chromadorea</taxon>
        <taxon>Rhabditida</taxon>
        <taxon>Rhabditina</taxon>
        <taxon>Rhabditomorpha</taxon>
        <taxon>Rhabditoidea</taxon>
        <taxon>Rhabditidae</taxon>
        <taxon>Peloderinae</taxon>
        <taxon>Caenorhabditis</taxon>
    </lineage>
</organism>
<dbReference type="EMBL" id="BX284604">
    <property type="protein sequence ID" value="CCD72524.1"/>
    <property type="molecule type" value="Genomic_DNA"/>
</dbReference>
<dbReference type="PIR" id="T28710">
    <property type="entry name" value="T28710"/>
</dbReference>
<dbReference type="RefSeq" id="NP_499891.1">
    <property type="nucleotide sequence ID" value="NM_067490.6"/>
</dbReference>
<dbReference type="SMR" id="O16785"/>
<dbReference type="BioGRID" id="42010">
    <property type="interactions" value="18"/>
</dbReference>
<dbReference type="DIP" id="DIP-25618N"/>
<dbReference type="FunCoup" id="O16785">
    <property type="interactions" value="1159"/>
</dbReference>
<dbReference type="IntAct" id="O16785">
    <property type="interactions" value="3"/>
</dbReference>
<dbReference type="STRING" id="6239.T21D12.4.1"/>
<dbReference type="iPTMnet" id="O16785"/>
<dbReference type="PaxDb" id="6239-T21D12.4"/>
<dbReference type="PeptideAtlas" id="O16785"/>
<dbReference type="EnsemblMetazoa" id="T21D12.4.1">
    <property type="protein sequence ID" value="T21D12.4.1"/>
    <property type="gene ID" value="WBGene00003932"/>
</dbReference>
<dbReference type="GeneID" id="176848"/>
<dbReference type="KEGG" id="cel:CELE_T21D12.4"/>
<dbReference type="UCSC" id="T21D12.4">
    <property type="organism name" value="c. elegans"/>
</dbReference>
<dbReference type="AGR" id="WB:WBGene00003932"/>
<dbReference type="CTD" id="176848"/>
<dbReference type="WormBase" id="T21D12.4">
    <property type="protein sequence ID" value="CE18268"/>
    <property type="gene ID" value="WBGene00003932"/>
    <property type="gene designation" value="pat-6"/>
</dbReference>
<dbReference type="eggNOG" id="KOG3631">
    <property type="taxonomic scope" value="Eukaryota"/>
</dbReference>
<dbReference type="GeneTree" id="ENSGT00950000183194"/>
<dbReference type="HOGENOM" id="CLU_047624_2_0_1"/>
<dbReference type="InParanoid" id="O16785"/>
<dbReference type="OMA" id="VDLLIYW"/>
<dbReference type="OrthoDB" id="2099265at2759"/>
<dbReference type="PhylomeDB" id="O16785"/>
<dbReference type="Reactome" id="R-CEL-446353">
    <property type="pathway name" value="Cell-extracellular matrix interactions"/>
</dbReference>
<dbReference type="Reactome" id="R-CEL-446388">
    <property type="pathway name" value="Regulation of cytoskeletal remodeling and cell spreading by IPP complex components"/>
</dbReference>
<dbReference type="PRO" id="PR:O16785"/>
<dbReference type="Proteomes" id="UP000001940">
    <property type="component" value="Chromosome IV"/>
</dbReference>
<dbReference type="Bgee" id="WBGene00003932">
    <property type="expression patterns" value="Expressed in pharyngeal muscle cell (C elegans) and 4 other cell types or tissues"/>
</dbReference>
<dbReference type="GO" id="GO:0015629">
    <property type="term" value="C:actin cytoskeleton"/>
    <property type="evidence" value="ECO:0000318"/>
    <property type="project" value="GO_Central"/>
</dbReference>
<dbReference type="GO" id="GO:0030424">
    <property type="term" value="C:axon"/>
    <property type="evidence" value="ECO:0007669"/>
    <property type="project" value="UniProtKB-SubCell"/>
</dbReference>
<dbReference type="GO" id="GO:0009925">
    <property type="term" value="C:basal plasma membrane"/>
    <property type="evidence" value="ECO:0000314"/>
    <property type="project" value="UniProtKB"/>
</dbReference>
<dbReference type="GO" id="GO:0005737">
    <property type="term" value="C:cytoplasm"/>
    <property type="evidence" value="ECO:0000318"/>
    <property type="project" value="GO_Central"/>
</dbReference>
<dbReference type="GO" id="GO:0005925">
    <property type="term" value="C:focal adhesion"/>
    <property type="evidence" value="ECO:0000318"/>
    <property type="project" value="GO_Central"/>
</dbReference>
<dbReference type="GO" id="GO:0031430">
    <property type="term" value="C:M band"/>
    <property type="evidence" value="ECO:0000314"/>
    <property type="project" value="UniProtKB"/>
</dbReference>
<dbReference type="GO" id="GO:0043204">
    <property type="term" value="C:perikaryon"/>
    <property type="evidence" value="ECO:0007669"/>
    <property type="project" value="UniProtKB-SubCell"/>
</dbReference>
<dbReference type="GO" id="GO:0055120">
    <property type="term" value="C:striated muscle dense body"/>
    <property type="evidence" value="ECO:0000314"/>
    <property type="project" value="UniProtKB"/>
</dbReference>
<dbReference type="GO" id="GO:0003779">
    <property type="term" value="F:actin binding"/>
    <property type="evidence" value="ECO:0000318"/>
    <property type="project" value="GO_Central"/>
</dbReference>
<dbReference type="GO" id="GO:0030036">
    <property type="term" value="P:actin cytoskeleton organization"/>
    <property type="evidence" value="ECO:0000318"/>
    <property type="project" value="GO_Central"/>
</dbReference>
<dbReference type="GO" id="GO:0030031">
    <property type="term" value="P:cell projection assembly"/>
    <property type="evidence" value="ECO:0000318"/>
    <property type="project" value="GO_Central"/>
</dbReference>
<dbReference type="GO" id="GO:0071963">
    <property type="term" value="P:establishment or maintenance of cell polarity regulating cell shape"/>
    <property type="evidence" value="ECO:0000318"/>
    <property type="project" value="GO_Central"/>
</dbReference>
<dbReference type="GO" id="GO:0007005">
    <property type="term" value="P:mitochondrion organization"/>
    <property type="evidence" value="ECO:0000315"/>
    <property type="project" value="UniProtKB"/>
</dbReference>
<dbReference type="GO" id="GO:0046716">
    <property type="term" value="P:muscle cell cellular homeostasis"/>
    <property type="evidence" value="ECO:0000315"/>
    <property type="project" value="UniProtKB"/>
</dbReference>
<dbReference type="GO" id="GO:0040017">
    <property type="term" value="P:positive regulation of locomotion"/>
    <property type="evidence" value="ECO:0000315"/>
    <property type="project" value="UniProtKB"/>
</dbReference>
<dbReference type="GO" id="GO:0060298">
    <property type="term" value="P:positive regulation of sarcomere organization"/>
    <property type="evidence" value="ECO:0000315"/>
    <property type="project" value="UniProtKB"/>
</dbReference>
<dbReference type="GO" id="GO:0055002">
    <property type="term" value="P:striated muscle cell development"/>
    <property type="evidence" value="ECO:0000315"/>
    <property type="project" value="UniProtKB"/>
</dbReference>
<dbReference type="GO" id="GO:0034446">
    <property type="term" value="P:substrate adhesion-dependent cell spreading"/>
    <property type="evidence" value="ECO:0000318"/>
    <property type="project" value="GO_Central"/>
</dbReference>
<dbReference type="CDD" id="cd21221">
    <property type="entry name" value="CH_PARV_rpt1"/>
    <property type="match status" value="1"/>
</dbReference>
<dbReference type="CDD" id="cd21306">
    <property type="entry name" value="CH_PARVA_B_rpt2"/>
    <property type="match status" value="1"/>
</dbReference>
<dbReference type="FunFam" id="1.10.418.10:FF:000015">
    <property type="entry name" value="Parvin beta"/>
    <property type="match status" value="1"/>
</dbReference>
<dbReference type="FunFam" id="1.10.418.10:FF:000011">
    <property type="entry name" value="Parvin, beta"/>
    <property type="match status" value="1"/>
</dbReference>
<dbReference type="Gene3D" id="1.10.418.10">
    <property type="entry name" value="Calponin-like domain"/>
    <property type="match status" value="2"/>
</dbReference>
<dbReference type="InterPro" id="IPR001715">
    <property type="entry name" value="CH_dom"/>
</dbReference>
<dbReference type="InterPro" id="IPR036872">
    <property type="entry name" value="CH_dom_sf"/>
</dbReference>
<dbReference type="InterPro" id="IPR028433">
    <property type="entry name" value="Parvin"/>
</dbReference>
<dbReference type="PANTHER" id="PTHR12114:SF4">
    <property type="entry name" value="GH23568P"/>
    <property type="match status" value="1"/>
</dbReference>
<dbReference type="PANTHER" id="PTHR12114">
    <property type="entry name" value="PARVIN"/>
    <property type="match status" value="1"/>
</dbReference>
<dbReference type="Pfam" id="PF00307">
    <property type="entry name" value="CH"/>
    <property type="match status" value="2"/>
</dbReference>
<dbReference type="PIRSF" id="PIRSF039131">
    <property type="entry name" value="Parvin"/>
    <property type="match status" value="1"/>
</dbReference>
<dbReference type="SMART" id="SM00033">
    <property type="entry name" value="CH"/>
    <property type="match status" value="2"/>
</dbReference>
<dbReference type="SUPFAM" id="SSF47576">
    <property type="entry name" value="Calponin-homology domain, CH-domain"/>
    <property type="match status" value="1"/>
</dbReference>
<dbReference type="PROSITE" id="PS50021">
    <property type="entry name" value="CH"/>
    <property type="match status" value="2"/>
</dbReference>
<proteinExistence type="evidence at protein level"/>
<reference key="1">
    <citation type="journal article" date="1998" name="Science">
        <title>Genome sequence of the nematode C. elegans: a platform for investigating biology.</title>
        <authorList>
            <consortium name="The C. elegans sequencing consortium"/>
        </authorList>
    </citation>
    <scope>NUCLEOTIDE SEQUENCE [LARGE SCALE GENOMIC DNA]</scope>
    <source>
        <strain>Bristol N2</strain>
    </source>
</reference>
<reference key="2">
    <citation type="journal article" date="2003" name="Curr. Biol.">
        <title>C. elegans PAT-6/actopaxin plays a critical role in the assembly of integrin adhesion complexes in vivo.</title>
        <authorList>
            <person name="Lin X."/>
            <person name="Qadota H."/>
            <person name="Moerman D.G."/>
            <person name="Williams B.D."/>
        </authorList>
    </citation>
    <scope>FUNCTION</scope>
    <scope>SUBCELLULAR LOCATION</scope>
    <scope>TISSUE SPECIFICITY</scope>
    <scope>INTERACTION WITH PAT-4</scope>
    <scope>IDENTIFICATION IN A COMPLEX WITH UNC-112 AND PAT-4</scope>
    <scope>MUTAGENESIS OF PHE-275</scope>
</reference>
<reference key="3">
    <citation type="journal article" date="2006" name="Development">
        <title>FGF negatively regulates muscle membrane extension in Caenorhabditis elegans.</title>
        <authorList>
            <person name="Dixon S.J."/>
            <person name="Alexander M."/>
            <person name="Fernandes R."/>
            <person name="Ricker N."/>
            <person name="Roy P.J."/>
        </authorList>
    </citation>
    <scope>FUNCTION</scope>
    <scope>DISRUPTION PHENOTYPE</scope>
</reference>
<reference key="4">
    <citation type="journal article" date="2012" name="PLoS Genet.">
        <title>Calpains mediate integrin attachment complex maintenance of adult muscle in Caenorhabditis elegans.</title>
        <authorList>
            <person name="Etheridge T."/>
            <person name="Oczypok E.A."/>
            <person name="Lehmann S."/>
            <person name="Fields B.D."/>
            <person name="Shephard F."/>
            <person name="Jacobson L.A."/>
            <person name="Szewczyk N.J."/>
        </authorList>
    </citation>
    <scope>FUNCTION</scope>
    <scope>COMPONENT OF AN INTEGRIN CONTAINING ATTACHMENT COMPLEX</scope>
    <scope>DISRUPTION PHENOTYPE</scope>
</reference>
<reference key="5">
    <citation type="journal article" date="2013" name="Mol. Biol. Cell">
        <title>CPNA-1, a copine domain protein, is located at integrin adhesion sites and is required for myofilament stability in Caenorhabditis elegans.</title>
        <authorList>
            <person name="Warner A."/>
            <person name="Xiong G."/>
            <person name="Qadota H."/>
            <person name="Rogalski T."/>
            <person name="Vogl A.W."/>
            <person name="Moerman D.G."/>
            <person name="Benian G.M."/>
        </authorList>
    </citation>
    <scope>FUNCTION</scope>
    <scope>SUBCELLULAR LOCATION</scope>
    <scope>TISSUE SPECIFICITY</scope>
    <scope>DEVELOPMENTAL STAGE</scope>
    <scope>DISRUPTION PHENOTYPE</scope>
</reference>
<feature type="chain" id="PRO_0000121587" description="Paralyzed arrest at two-fold protein 6">
    <location>
        <begin position="1"/>
        <end position="375"/>
    </location>
</feature>
<feature type="domain" description="Calponin-homology (CH) 1" evidence="1">
    <location>
        <begin position="99"/>
        <end position="206"/>
    </location>
</feature>
<feature type="domain" description="Calponin-homology (CH) 2" evidence="1">
    <location>
        <begin position="266"/>
        <end position="373"/>
    </location>
</feature>
<feature type="region of interest" description="Disordered" evidence="2">
    <location>
        <begin position="1"/>
        <end position="51"/>
    </location>
</feature>
<feature type="compositionally biased region" description="Basic and acidic residues" evidence="2">
    <location>
        <begin position="10"/>
        <end position="20"/>
    </location>
</feature>
<feature type="mutagenesis site" description="No effect." evidence="3">
    <original>F</original>
    <variation>A</variation>
    <location>
        <position position="275"/>
    </location>
</feature>
<name>PARV_CAEEL</name>